<reference key="1">
    <citation type="journal article" date="2001" name="Proc. Natl. Acad. Sci. U.S.A.">
        <title>Complete genome sequence of Caulobacter crescentus.</title>
        <authorList>
            <person name="Nierman W.C."/>
            <person name="Feldblyum T.V."/>
            <person name="Laub M.T."/>
            <person name="Paulsen I.T."/>
            <person name="Nelson K.E."/>
            <person name="Eisen J.A."/>
            <person name="Heidelberg J.F."/>
            <person name="Alley M.R.K."/>
            <person name="Ohta N."/>
            <person name="Maddock J.R."/>
            <person name="Potocka I."/>
            <person name="Nelson W.C."/>
            <person name="Newton A."/>
            <person name="Stephens C."/>
            <person name="Phadke N.D."/>
            <person name="Ely B."/>
            <person name="DeBoy R.T."/>
            <person name="Dodson R.J."/>
            <person name="Durkin A.S."/>
            <person name="Gwinn M.L."/>
            <person name="Haft D.H."/>
            <person name="Kolonay J.F."/>
            <person name="Smit J."/>
            <person name="Craven M.B."/>
            <person name="Khouri H.M."/>
            <person name="Shetty J."/>
            <person name="Berry K.J."/>
            <person name="Utterback T.R."/>
            <person name="Tran K."/>
            <person name="Wolf A.M."/>
            <person name="Vamathevan J.J."/>
            <person name="Ermolaeva M.D."/>
            <person name="White O."/>
            <person name="Salzberg S.L."/>
            <person name="Venter J.C."/>
            <person name="Shapiro L."/>
            <person name="Fraser C.M."/>
        </authorList>
    </citation>
    <scope>NUCLEOTIDE SEQUENCE [LARGE SCALE GENOMIC DNA]</scope>
    <source>
        <strain>ATCC 19089 / CIP 103742 / CB 15</strain>
    </source>
</reference>
<sequence>MRVMIVDDSAVVRGMVTRWLEEAGFIIAAIAVDGGQALRKLADTSVDVCLLDIEMPVMSGLEALPKLLAAKPDLRVIMASTLTERGAEVTLRALDLGAADYIAKPSANKLGGADLYRKDLIEKVRHLGARAARPAPPQAAPRPTLAPPSSDPAGPIEAVVVASSTGGPPALRRFIAGLGADWTSPILIAQHMPPGFTRTLAQMLDPISHLTAREAQNGEPIVPGVIYVAPGDYHMTVRAAGGGGPSIHLDQGPEVNYCRPSADPLFESAARFWKGRVLGVVLTGMGRDGRDGAAVLAKVGGTIIAQDEATSVVWGMPGAVANAGLAEAVLPLDQIGPYIASRARSVA</sequence>
<keyword id="KW-0145">Chemotaxis</keyword>
<keyword id="KW-0963">Cytoplasm</keyword>
<keyword id="KW-0378">Hydrolase</keyword>
<keyword id="KW-0597">Phosphoprotein</keyword>
<keyword id="KW-1185">Reference proteome</keyword>
<feature type="chain" id="PRO_0000157985" description="Protein-glutamate methylesterase/protein-glutamine glutaminase 2">
    <location>
        <begin position="1"/>
        <end position="347"/>
    </location>
</feature>
<feature type="domain" description="Response regulatory" evidence="1">
    <location>
        <begin position="2"/>
        <end position="119"/>
    </location>
</feature>
<feature type="domain" description="CheB-type methylesterase" evidence="1">
    <location>
        <begin position="152"/>
        <end position="346"/>
    </location>
</feature>
<feature type="region of interest" description="Disordered" evidence="2">
    <location>
        <begin position="131"/>
        <end position="153"/>
    </location>
</feature>
<feature type="compositionally biased region" description="Pro residues" evidence="2">
    <location>
        <begin position="134"/>
        <end position="150"/>
    </location>
</feature>
<feature type="active site" evidence="1">
    <location>
        <position position="164"/>
    </location>
</feature>
<feature type="active site" evidence="1">
    <location>
        <position position="191"/>
    </location>
</feature>
<feature type="active site" evidence="1">
    <location>
        <position position="288"/>
    </location>
</feature>
<feature type="modified residue" description="4-aspartylphosphate" evidence="1">
    <location>
        <position position="52"/>
    </location>
</feature>
<proteinExistence type="inferred from homology"/>
<protein>
    <recommendedName>
        <fullName evidence="1">Protein-glutamate methylesterase/protein-glutamine glutaminase 2</fullName>
        <ecNumber evidence="1">3.1.1.61</ecNumber>
        <ecNumber evidence="1">3.5.1.44</ecNumber>
    </recommendedName>
</protein>
<evidence type="ECO:0000255" key="1">
    <source>
        <dbReference type="HAMAP-Rule" id="MF_00099"/>
    </source>
</evidence>
<evidence type="ECO:0000256" key="2">
    <source>
        <dbReference type="SAM" id="MobiDB-lite"/>
    </source>
</evidence>
<name>CHEB2_CAUVC</name>
<dbReference type="EC" id="3.1.1.61" evidence="1"/>
<dbReference type="EC" id="3.5.1.44" evidence="1"/>
<dbReference type="EMBL" id="AE005673">
    <property type="protein sequence ID" value="AAK22583.1"/>
    <property type="molecule type" value="Genomic_DNA"/>
</dbReference>
<dbReference type="PIR" id="C87323">
    <property type="entry name" value="C87323"/>
</dbReference>
<dbReference type="SMR" id="Q9AAK0"/>
<dbReference type="STRING" id="190650.CC_0597"/>
<dbReference type="EnsemblBacteria" id="AAK22583">
    <property type="protein sequence ID" value="AAK22583"/>
    <property type="gene ID" value="CC_0597"/>
</dbReference>
<dbReference type="KEGG" id="ccr:CC_0597"/>
<dbReference type="eggNOG" id="COG2201">
    <property type="taxonomic scope" value="Bacteria"/>
</dbReference>
<dbReference type="HOGENOM" id="CLU_000445_51_0_5"/>
<dbReference type="BioCyc" id="CAULO:CC0597-MONOMER"/>
<dbReference type="Proteomes" id="UP000001816">
    <property type="component" value="Chromosome"/>
</dbReference>
<dbReference type="GO" id="GO:0005737">
    <property type="term" value="C:cytoplasm"/>
    <property type="evidence" value="ECO:0007669"/>
    <property type="project" value="UniProtKB-SubCell"/>
</dbReference>
<dbReference type="GO" id="GO:0000156">
    <property type="term" value="F:phosphorelay response regulator activity"/>
    <property type="evidence" value="ECO:0007669"/>
    <property type="project" value="InterPro"/>
</dbReference>
<dbReference type="GO" id="GO:0008984">
    <property type="term" value="F:protein-glutamate methylesterase activity"/>
    <property type="evidence" value="ECO:0007669"/>
    <property type="project" value="UniProtKB-UniRule"/>
</dbReference>
<dbReference type="GO" id="GO:0050568">
    <property type="term" value="F:protein-glutamine glutaminase activity"/>
    <property type="evidence" value="ECO:0007669"/>
    <property type="project" value="UniProtKB-UniRule"/>
</dbReference>
<dbReference type="GO" id="GO:0006935">
    <property type="term" value="P:chemotaxis"/>
    <property type="evidence" value="ECO:0007669"/>
    <property type="project" value="UniProtKB-UniRule"/>
</dbReference>
<dbReference type="CDD" id="cd16432">
    <property type="entry name" value="CheB_Rec"/>
    <property type="match status" value="1"/>
</dbReference>
<dbReference type="CDD" id="cd17541">
    <property type="entry name" value="REC_CheB-like"/>
    <property type="match status" value="1"/>
</dbReference>
<dbReference type="Gene3D" id="3.40.50.2300">
    <property type="match status" value="1"/>
</dbReference>
<dbReference type="Gene3D" id="3.40.50.180">
    <property type="entry name" value="Methylesterase CheB, C-terminal domain"/>
    <property type="match status" value="1"/>
</dbReference>
<dbReference type="HAMAP" id="MF_00099">
    <property type="entry name" value="CheB_chemtxs"/>
    <property type="match status" value="1"/>
</dbReference>
<dbReference type="InterPro" id="IPR008248">
    <property type="entry name" value="CheB-like"/>
</dbReference>
<dbReference type="InterPro" id="IPR035909">
    <property type="entry name" value="CheB_C"/>
</dbReference>
<dbReference type="InterPro" id="IPR011006">
    <property type="entry name" value="CheY-like_superfamily"/>
</dbReference>
<dbReference type="InterPro" id="IPR000673">
    <property type="entry name" value="Sig_transdc_resp-reg_Me-estase"/>
</dbReference>
<dbReference type="InterPro" id="IPR001789">
    <property type="entry name" value="Sig_transdc_resp-reg_receiver"/>
</dbReference>
<dbReference type="NCBIfam" id="NF001965">
    <property type="entry name" value="PRK00742.1"/>
    <property type="match status" value="1"/>
</dbReference>
<dbReference type="PANTHER" id="PTHR42872">
    <property type="entry name" value="PROTEIN-GLUTAMATE METHYLESTERASE/PROTEIN-GLUTAMINE GLUTAMINASE"/>
    <property type="match status" value="1"/>
</dbReference>
<dbReference type="PANTHER" id="PTHR42872:SF3">
    <property type="entry name" value="PROTEIN-GLUTAMATE METHYLESTERASE_PROTEIN-GLUTAMINE GLUTAMINASE 1"/>
    <property type="match status" value="1"/>
</dbReference>
<dbReference type="Pfam" id="PF01339">
    <property type="entry name" value="CheB_methylest"/>
    <property type="match status" value="1"/>
</dbReference>
<dbReference type="Pfam" id="PF00072">
    <property type="entry name" value="Response_reg"/>
    <property type="match status" value="1"/>
</dbReference>
<dbReference type="PIRSF" id="PIRSF000876">
    <property type="entry name" value="RR_chemtxs_CheB"/>
    <property type="match status" value="1"/>
</dbReference>
<dbReference type="SMART" id="SM00448">
    <property type="entry name" value="REC"/>
    <property type="match status" value="1"/>
</dbReference>
<dbReference type="SUPFAM" id="SSF52172">
    <property type="entry name" value="CheY-like"/>
    <property type="match status" value="1"/>
</dbReference>
<dbReference type="SUPFAM" id="SSF52738">
    <property type="entry name" value="Methylesterase CheB, C-terminal domain"/>
    <property type="match status" value="1"/>
</dbReference>
<dbReference type="PROSITE" id="PS50122">
    <property type="entry name" value="CHEB"/>
    <property type="match status" value="1"/>
</dbReference>
<dbReference type="PROSITE" id="PS50110">
    <property type="entry name" value="RESPONSE_REGULATORY"/>
    <property type="match status" value="1"/>
</dbReference>
<accession>Q9AAK0</accession>
<gene>
    <name evidence="1" type="primary">cheB2</name>
    <name type="ordered locus">CC_0597</name>
</gene>
<organism>
    <name type="scientific">Caulobacter vibrioides (strain ATCC 19089 / CIP 103742 / CB 15)</name>
    <name type="common">Caulobacter crescentus</name>
    <dbReference type="NCBI Taxonomy" id="190650"/>
    <lineage>
        <taxon>Bacteria</taxon>
        <taxon>Pseudomonadati</taxon>
        <taxon>Pseudomonadota</taxon>
        <taxon>Alphaproteobacteria</taxon>
        <taxon>Caulobacterales</taxon>
        <taxon>Caulobacteraceae</taxon>
        <taxon>Caulobacter</taxon>
    </lineage>
</organism>
<comment type="function">
    <text evidence="1">Involved in chemotaxis. Part of a chemotaxis signal transduction system that modulates chemotaxis in response to various stimuli. Catalyzes the demethylation of specific methylglutamate residues introduced into the chemoreceptors (methyl-accepting chemotaxis proteins or MCP) by CheR. Also mediates the irreversible deamidation of specific glutamine residues to glutamic acid.</text>
</comment>
<comment type="catalytic activity">
    <reaction evidence="1">
        <text>[protein]-L-glutamate 5-O-methyl ester + H2O = L-glutamyl-[protein] + methanol + H(+)</text>
        <dbReference type="Rhea" id="RHEA:23236"/>
        <dbReference type="Rhea" id="RHEA-COMP:10208"/>
        <dbReference type="Rhea" id="RHEA-COMP:10311"/>
        <dbReference type="ChEBI" id="CHEBI:15377"/>
        <dbReference type="ChEBI" id="CHEBI:15378"/>
        <dbReference type="ChEBI" id="CHEBI:17790"/>
        <dbReference type="ChEBI" id="CHEBI:29973"/>
        <dbReference type="ChEBI" id="CHEBI:82795"/>
        <dbReference type="EC" id="3.1.1.61"/>
    </reaction>
</comment>
<comment type="catalytic activity">
    <reaction evidence="1">
        <text>L-glutaminyl-[protein] + H2O = L-glutamyl-[protein] + NH4(+)</text>
        <dbReference type="Rhea" id="RHEA:16441"/>
        <dbReference type="Rhea" id="RHEA-COMP:10207"/>
        <dbReference type="Rhea" id="RHEA-COMP:10208"/>
        <dbReference type="ChEBI" id="CHEBI:15377"/>
        <dbReference type="ChEBI" id="CHEBI:28938"/>
        <dbReference type="ChEBI" id="CHEBI:29973"/>
        <dbReference type="ChEBI" id="CHEBI:30011"/>
        <dbReference type="EC" id="3.5.1.44"/>
    </reaction>
</comment>
<comment type="subcellular location">
    <subcellularLocation>
        <location evidence="1">Cytoplasm</location>
    </subcellularLocation>
</comment>
<comment type="domain">
    <text evidence="1">Contains a C-terminal catalytic domain, and an N-terminal region which modulates catalytic activity.</text>
</comment>
<comment type="PTM">
    <text evidence="1">Phosphorylated by CheA. Phosphorylation of the N-terminal regulatory domain activates the methylesterase activity.</text>
</comment>
<comment type="similarity">
    <text evidence="1">Belongs to the CheB family.</text>
</comment>